<keyword id="KW-1003">Cell membrane</keyword>
<keyword id="KW-0413">Isomerase</keyword>
<keyword id="KW-0448">Lipopolysaccharide biosynthesis</keyword>
<keyword id="KW-0460">Magnesium</keyword>
<keyword id="KW-0472">Membrane</keyword>
<keyword id="KW-0479">Metal-binding</keyword>
<keyword id="KW-0597">Phosphoprotein</keyword>
<keyword id="KW-0812">Transmembrane</keyword>
<keyword id="KW-1133">Transmembrane helix</keyword>
<reference key="1">
    <citation type="journal article" date="1992" name="Mol. Microbiol.">
        <title>Molecular analysis of the rfb gene cluster of Salmonella serovar muenchen (strain M67): the genetic basis of the polymorphism between groups C2 and B.</title>
        <authorList>
            <person name="Brown P.K."/>
            <person name="Romana L.K."/>
            <person name="Reeves P.R."/>
        </authorList>
    </citation>
    <scope>NUCLEOTIDE SEQUENCE [GENOMIC DNA]</scope>
    <source>
        <strain>M67</strain>
    </source>
</reference>
<feature type="chain" id="PRO_0000147825" description="Phosphomannomutase">
    <location>
        <begin position="1"/>
        <end position="478"/>
    </location>
</feature>
<feature type="transmembrane region" description="Helical" evidence="2">
    <location>
        <begin position="30"/>
        <end position="46"/>
    </location>
</feature>
<feature type="transmembrane region" description="Helical" evidence="2">
    <location>
        <begin position="265"/>
        <end position="284"/>
    </location>
</feature>
<feature type="active site" description="Phosphoserine intermediate" evidence="1">
    <location>
        <position position="111"/>
    </location>
</feature>
<feature type="binding site" description="via phosphate group" evidence="1">
    <location>
        <position position="111"/>
    </location>
    <ligand>
        <name>Mg(2+)</name>
        <dbReference type="ChEBI" id="CHEBI:18420"/>
    </ligand>
</feature>
<feature type="binding site" evidence="1">
    <location>
        <position position="245"/>
    </location>
    <ligand>
        <name>Mg(2+)</name>
        <dbReference type="ChEBI" id="CHEBI:18420"/>
    </ligand>
</feature>
<feature type="binding site" evidence="1">
    <location>
        <position position="247"/>
    </location>
    <ligand>
        <name>Mg(2+)</name>
        <dbReference type="ChEBI" id="CHEBI:18420"/>
    </ligand>
</feature>
<feature type="binding site" evidence="1">
    <location>
        <position position="249"/>
    </location>
    <ligand>
        <name>Mg(2+)</name>
        <dbReference type="ChEBI" id="CHEBI:18420"/>
    </ligand>
</feature>
<accession>Q00330</accession>
<organism>
    <name type="scientific">Salmonella muenchen</name>
    <dbReference type="NCBI Taxonomy" id="596"/>
    <lineage>
        <taxon>Bacteria</taxon>
        <taxon>Pseudomonadati</taxon>
        <taxon>Pseudomonadota</taxon>
        <taxon>Gammaproteobacteria</taxon>
        <taxon>Enterobacterales</taxon>
        <taxon>Enterobacteriaceae</taxon>
        <taxon>Salmonella</taxon>
    </lineage>
</organism>
<name>RFBK_SALMU</name>
<proteinExistence type="inferred from homology"/>
<evidence type="ECO:0000250" key="1"/>
<evidence type="ECO:0000255" key="2"/>
<evidence type="ECO:0000305" key="3"/>
<sequence>MKNIYNTYDVINKSGINFGTSGARGLVTDFTPEVCARFTISFLTVMQQRFSFTTVALAIDNRPSSYAMAQACAAALQEKGIKTVYYGVIPTPALAHQSISDKVPAIMVTGSHIPFDRNGLKFYRPDGEITKDDENAIIHVDASFMQPKLEQLTISTIAARNYILRYTSLFPMPFLKNKRIGIYEHSSAGRDLYKTLFKMLGATVVSLARSDEFVPIDTEAVSEDDRNKAITWAKKYQLDAIFSTDGDGDRPLIADEYGNWLRGDILGLLCSLELAADAVAIPVSCNSTISSGNFFKHVERTKIGSPYVIAAFAKLSANYNCIAGFEANGGFLLGSDVYINQRLLKALPTRDALLPAIMLLFGSKDKSISELVKKLPARYTYSNRLQDISVKTSMSLINLGLTDQEDFLQYIGFNKHHILHSDVTDGFRITIDNNNIIHLRPSGNAPELRCYAEADSQEDACNIVETVLSNIKSKLGRA</sequence>
<gene>
    <name type="primary">manB</name>
    <name type="synonym">rfbK</name>
</gene>
<protein>
    <recommendedName>
        <fullName>Phosphomannomutase</fullName>
        <shortName>PMM</shortName>
        <ecNumber>5.4.2.8</ecNumber>
    </recommendedName>
</protein>
<comment type="function">
    <text>Involved in GDP-mannose biosynthesis which serves as the activated sugar nucleotide precursor for mannose residues in cell surface polysaccharides. This enzyme participates in synthesis of the LPS group C2 O antigen.</text>
</comment>
<comment type="catalytic activity">
    <reaction>
        <text>alpha-D-mannose 1-phosphate = D-mannose 6-phosphate</text>
        <dbReference type="Rhea" id="RHEA:11140"/>
        <dbReference type="ChEBI" id="CHEBI:58409"/>
        <dbReference type="ChEBI" id="CHEBI:58735"/>
        <dbReference type="EC" id="5.4.2.8"/>
    </reaction>
</comment>
<comment type="cofactor">
    <cofactor evidence="1">
        <name>Mg(2+)</name>
        <dbReference type="ChEBI" id="CHEBI:18420"/>
    </cofactor>
    <text evidence="1">Binds 1 Mg(2+) ion per subunit.</text>
</comment>
<comment type="pathway">
    <text>Nucleotide-sugar biosynthesis; GDP-alpha-D-mannose biosynthesis; alpha-D-mannose 1-phosphate from D-fructose 6-phosphate: step 2/2.</text>
</comment>
<comment type="pathway">
    <text>Bacterial outer membrane biogenesis; LPS O-antigen biosynthesis.</text>
</comment>
<comment type="subcellular location">
    <subcellularLocation>
        <location evidence="3">Cell membrane</location>
        <topology evidence="3">Multi-pass membrane protein</topology>
    </subcellularLocation>
</comment>
<comment type="similarity">
    <text evidence="3">Belongs to the phosphohexose mutase family.</text>
</comment>
<dbReference type="EC" id="5.4.2.8"/>
<dbReference type="EMBL" id="X61917">
    <property type="protein sequence ID" value="CAA43916.1"/>
    <property type="molecule type" value="Genomic_DNA"/>
</dbReference>
<dbReference type="PIR" id="S22622">
    <property type="entry name" value="S22622"/>
</dbReference>
<dbReference type="SMR" id="Q00330"/>
<dbReference type="UniPathway" id="UPA00126">
    <property type="reaction ID" value="UER00424"/>
</dbReference>
<dbReference type="UniPathway" id="UPA00281"/>
<dbReference type="GO" id="GO:0005829">
    <property type="term" value="C:cytosol"/>
    <property type="evidence" value="ECO:0007669"/>
    <property type="project" value="TreeGrafter"/>
</dbReference>
<dbReference type="GO" id="GO:0005886">
    <property type="term" value="C:plasma membrane"/>
    <property type="evidence" value="ECO:0007669"/>
    <property type="project" value="UniProtKB-SubCell"/>
</dbReference>
<dbReference type="GO" id="GO:0000287">
    <property type="term" value="F:magnesium ion binding"/>
    <property type="evidence" value="ECO:0007669"/>
    <property type="project" value="InterPro"/>
</dbReference>
<dbReference type="GO" id="GO:0008966">
    <property type="term" value="F:phosphoglucosamine mutase activity"/>
    <property type="evidence" value="ECO:0007669"/>
    <property type="project" value="TreeGrafter"/>
</dbReference>
<dbReference type="GO" id="GO:0004615">
    <property type="term" value="F:phosphomannomutase activity"/>
    <property type="evidence" value="ECO:0007669"/>
    <property type="project" value="UniProtKB-EC"/>
</dbReference>
<dbReference type="GO" id="GO:0009298">
    <property type="term" value="P:GDP-mannose biosynthetic process"/>
    <property type="evidence" value="ECO:0007669"/>
    <property type="project" value="UniProtKB-UniPathway"/>
</dbReference>
<dbReference type="GO" id="GO:0009243">
    <property type="term" value="P:O antigen biosynthetic process"/>
    <property type="evidence" value="ECO:0007669"/>
    <property type="project" value="UniProtKB-UniPathway"/>
</dbReference>
<dbReference type="GO" id="GO:0009252">
    <property type="term" value="P:peptidoglycan biosynthetic process"/>
    <property type="evidence" value="ECO:0007669"/>
    <property type="project" value="TreeGrafter"/>
</dbReference>
<dbReference type="GO" id="GO:0006048">
    <property type="term" value="P:UDP-N-acetylglucosamine biosynthetic process"/>
    <property type="evidence" value="ECO:0007669"/>
    <property type="project" value="TreeGrafter"/>
</dbReference>
<dbReference type="CDD" id="cd03088">
    <property type="entry name" value="ManB"/>
    <property type="match status" value="1"/>
</dbReference>
<dbReference type="Gene3D" id="3.40.120.10">
    <property type="entry name" value="Alpha-D-Glucose-1,6-Bisphosphate, subunit A, domain 3"/>
    <property type="match status" value="3"/>
</dbReference>
<dbReference type="Gene3D" id="3.30.310.50">
    <property type="entry name" value="Alpha-D-phosphohexomutase, C-terminal domain"/>
    <property type="match status" value="1"/>
</dbReference>
<dbReference type="InterPro" id="IPR005844">
    <property type="entry name" value="A-D-PHexomutase_a/b/a-I"/>
</dbReference>
<dbReference type="InterPro" id="IPR016055">
    <property type="entry name" value="A-D-PHexomutase_a/b/a-I/II/III"/>
</dbReference>
<dbReference type="InterPro" id="IPR005845">
    <property type="entry name" value="A-D-PHexomutase_a/b/a-II"/>
</dbReference>
<dbReference type="InterPro" id="IPR005846">
    <property type="entry name" value="A-D-PHexomutase_a/b/a-III"/>
</dbReference>
<dbReference type="InterPro" id="IPR005843">
    <property type="entry name" value="A-D-PHexomutase_C"/>
</dbReference>
<dbReference type="InterPro" id="IPR036900">
    <property type="entry name" value="A-D-PHexomutase_C_sf"/>
</dbReference>
<dbReference type="InterPro" id="IPR016066">
    <property type="entry name" value="A-D-PHexomutase_CS"/>
</dbReference>
<dbReference type="InterPro" id="IPR050060">
    <property type="entry name" value="Phosphoglucosamine_mutase"/>
</dbReference>
<dbReference type="PANTHER" id="PTHR42946:SF1">
    <property type="entry name" value="PHOSPHOGLUCOMUTASE (ALPHA-D-GLUCOSE-1,6-BISPHOSPHATE-DEPENDENT)"/>
    <property type="match status" value="1"/>
</dbReference>
<dbReference type="PANTHER" id="PTHR42946">
    <property type="entry name" value="PHOSPHOHEXOSE MUTASE"/>
    <property type="match status" value="1"/>
</dbReference>
<dbReference type="Pfam" id="PF02878">
    <property type="entry name" value="PGM_PMM_I"/>
    <property type="match status" value="1"/>
</dbReference>
<dbReference type="Pfam" id="PF02879">
    <property type="entry name" value="PGM_PMM_II"/>
    <property type="match status" value="1"/>
</dbReference>
<dbReference type="Pfam" id="PF02880">
    <property type="entry name" value="PGM_PMM_III"/>
    <property type="match status" value="1"/>
</dbReference>
<dbReference type="Pfam" id="PF00408">
    <property type="entry name" value="PGM_PMM_IV"/>
    <property type="match status" value="1"/>
</dbReference>
<dbReference type="SUPFAM" id="SSF55957">
    <property type="entry name" value="Phosphoglucomutase, C-terminal domain"/>
    <property type="match status" value="1"/>
</dbReference>
<dbReference type="SUPFAM" id="SSF53738">
    <property type="entry name" value="Phosphoglucomutase, first 3 domains"/>
    <property type="match status" value="3"/>
</dbReference>
<dbReference type="PROSITE" id="PS00710">
    <property type="entry name" value="PGM_PMM"/>
    <property type="match status" value="1"/>
</dbReference>